<feature type="chain" id="PRO_0000099242" description="Virion membrane protein OPG140">
    <location>
        <begin position="1"/>
        <end position="90"/>
    </location>
</feature>
<feature type="topological domain" description="Intravirion" evidence="3">
    <location>
        <begin position="1"/>
        <end position="10"/>
    </location>
</feature>
<feature type="transmembrane region" description="Helical" evidence="3">
    <location>
        <begin position="11"/>
        <end position="31"/>
    </location>
</feature>
<feature type="topological domain" description="Virion surface" evidence="3">
    <location>
        <begin position="32"/>
        <end position="44"/>
    </location>
</feature>
<feature type="transmembrane region" description="Helical" evidence="3">
    <location>
        <begin position="45"/>
        <end position="65"/>
    </location>
</feature>
<feature type="topological domain" description="Intravirion" evidence="3">
    <location>
        <begin position="66"/>
        <end position="90"/>
    </location>
</feature>
<feature type="modified residue" description="Phosphoserine" evidence="1">
    <location>
        <position position="85"/>
    </location>
</feature>
<feature type="disulfide bond" description="Interchain" evidence="1">
    <location>
        <position position="71"/>
    </location>
</feature>
<proteinExistence type="inferred from homology"/>
<evidence type="ECO:0000250" key="1"/>
<evidence type="ECO:0000250" key="2">
    <source>
        <dbReference type="UniProtKB" id="Q76ZQ3"/>
    </source>
</evidence>
<evidence type="ECO:0000255" key="3"/>
<evidence type="ECO:0000305" key="4"/>
<reference key="1">
    <citation type="journal article" date="1990" name="Virology">
        <title>The complete DNA sequence of vaccinia virus.</title>
        <authorList>
            <person name="Goebel S.J."/>
            <person name="Johnson G.P."/>
            <person name="Perkus M.E."/>
            <person name="Davis S.W."/>
            <person name="Winslow J.P."/>
            <person name="Paoletti E."/>
        </authorList>
    </citation>
    <scope>NUCLEOTIDE SEQUENCE [LARGE SCALE GENOMIC DNA]</scope>
</reference>
<reference key="2">
    <citation type="journal article" date="1990" name="Virology">
        <title>Appendix to 'The complete DNA sequence of vaccinia virus'.</title>
        <authorList>
            <person name="Goebel S.J."/>
            <person name="Johnson G.P."/>
            <person name="Perkus M.E."/>
            <person name="Davis S.W."/>
            <person name="Winslow J.P."/>
            <person name="Paoletti E."/>
        </authorList>
    </citation>
    <scope>NUCLEOTIDE SEQUENCE [LARGE SCALE GENOMIC DNA]</scope>
</reference>
<protein>
    <recommendedName>
        <fullName>Virion membrane protein OPG140</fullName>
    </recommendedName>
</protein>
<comment type="function">
    <text evidence="2">Envelope protein which is a major component of the mature virion (MV) membrane. Essential for membrane biogenesis. Is required, together with OPG144, to form bona fide crescents, which can progress to form the immature virion (IV) membrane. OPG140 and OPG144 form a lattice that is stabilized by disulfide bonds and serves as an anchor within the viral membrane to which several other proteins important in virion structure and morphogenesis attach.</text>
</comment>
<comment type="subunit">
    <text evidence="2">Homodimer; disulfide-linked. Interacts with OPG144.</text>
</comment>
<comment type="subcellular location">
    <subcellularLocation>
        <location evidence="2">Virion membrane</location>
        <topology evidence="2">Multi-pass membrane protein</topology>
    </subcellularLocation>
    <text evidence="2">Component of the mature virion (MV) membrane.</text>
</comment>
<comment type="PTM">
    <text evidence="2">Phosphorylated by viral OPG054 kinase, phosphorylation state is regulated by OPG106 phosphatase.</text>
</comment>
<comment type="similarity">
    <text evidence="4">Belongs to the orthopoxvirus OPG140 family.</text>
</comment>
<name>PG140_VACCC</name>
<sequence>MDMMLMIGNYFSGVLIAGIILLILSCIFAFIDFSKSTSPTRTWKVLSIMAFILGIIITVGMLIYSMWGKHCAPHRVSGVIHTNHSDISMN</sequence>
<accession>P20991</accession>
<gene>
    <name type="primary">OPG140</name>
    <name type="ORF">A14L</name>
</gene>
<dbReference type="EMBL" id="M35027">
    <property type="protein sequence ID" value="AAA48136.1"/>
    <property type="molecule type" value="Genomic_DNA"/>
</dbReference>
<dbReference type="PIR" id="G42518">
    <property type="entry name" value="G42518"/>
</dbReference>
<dbReference type="SMR" id="P20991"/>
<dbReference type="IntAct" id="P20991">
    <property type="interactions" value="1"/>
</dbReference>
<dbReference type="MINT" id="P20991"/>
<dbReference type="Proteomes" id="UP000008269">
    <property type="component" value="Segment"/>
</dbReference>
<dbReference type="GO" id="GO:0016020">
    <property type="term" value="C:membrane"/>
    <property type="evidence" value="ECO:0007669"/>
    <property type="project" value="UniProtKB-KW"/>
</dbReference>
<dbReference type="GO" id="GO:0019031">
    <property type="term" value="C:viral envelope"/>
    <property type="evidence" value="ECO:0007669"/>
    <property type="project" value="UniProtKB-KW"/>
</dbReference>
<dbReference type="GO" id="GO:0055036">
    <property type="term" value="C:virion membrane"/>
    <property type="evidence" value="ECO:0007669"/>
    <property type="project" value="UniProtKB-SubCell"/>
</dbReference>
<dbReference type="InterPro" id="IPR008785">
    <property type="entry name" value="Poxvirus_A14"/>
</dbReference>
<dbReference type="Pfam" id="PF05767">
    <property type="entry name" value="Pox_A14"/>
    <property type="match status" value="1"/>
</dbReference>
<keyword id="KW-1015">Disulfide bond</keyword>
<keyword id="KW-0472">Membrane</keyword>
<keyword id="KW-0597">Phosphoprotein</keyword>
<keyword id="KW-1185">Reference proteome</keyword>
<keyword id="KW-0812">Transmembrane</keyword>
<keyword id="KW-1133">Transmembrane helix</keyword>
<keyword id="KW-0261">Viral envelope protein</keyword>
<keyword id="KW-0946">Virion</keyword>
<organism>
    <name type="scientific">Vaccinia virus (strain Copenhagen)</name>
    <name type="common">VACV</name>
    <dbReference type="NCBI Taxonomy" id="10249"/>
    <lineage>
        <taxon>Viruses</taxon>
        <taxon>Varidnaviria</taxon>
        <taxon>Bamfordvirae</taxon>
        <taxon>Nucleocytoviricota</taxon>
        <taxon>Pokkesviricetes</taxon>
        <taxon>Chitovirales</taxon>
        <taxon>Poxviridae</taxon>
        <taxon>Chordopoxvirinae</taxon>
        <taxon>Orthopoxvirus</taxon>
        <taxon>Vaccinia virus</taxon>
    </lineage>
</organism>
<organismHost>
    <name type="scientific">Homo sapiens</name>
    <name type="common">Human</name>
    <dbReference type="NCBI Taxonomy" id="9606"/>
</organismHost>